<protein>
    <recommendedName>
        <fullName evidence="11">Pollen receptor-like kinase 4</fullName>
        <shortName evidence="11">AtPRK4</shortName>
        <ecNumber evidence="12">2.7.11.1</ecNumber>
    </recommendedName>
</protein>
<dbReference type="EC" id="2.7.11.1" evidence="12"/>
<dbReference type="EMBL" id="AP000383">
    <property type="protein sequence ID" value="BAB01878.1"/>
    <property type="molecule type" value="Genomic_DNA"/>
</dbReference>
<dbReference type="EMBL" id="CP002686">
    <property type="protein sequence ID" value="AEE76345.1"/>
    <property type="molecule type" value="Genomic_DNA"/>
</dbReference>
<dbReference type="EMBL" id="BT046196">
    <property type="protein sequence ID" value="ACI49795.1"/>
    <property type="molecule type" value="mRNA"/>
</dbReference>
<dbReference type="EMBL" id="FJ708724">
    <property type="protein sequence ID" value="ACN59319.1"/>
    <property type="molecule type" value="mRNA"/>
</dbReference>
<dbReference type="EMBL" id="BT002912">
    <property type="protein sequence ID" value="AAO22728.1"/>
    <property type="molecule type" value="mRNA"/>
</dbReference>
<dbReference type="RefSeq" id="NP_188654.2">
    <property type="nucleotide sequence ID" value="NM_112910.5"/>
</dbReference>
<dbReference type="SMR" id="Q9LJY0"/>
<dbReference type="FunCoup" id="Q9LJY0">
    <property type="interactions" value="7"/>
</dbReference>
<dbReference type="IntAct" id="Q9LJY0">
    <property type="interactions" value="96"/>
</dbReference>
<dbReference type="STRING" id="3702.Q9LJY0"/>
<dbReference type="iPTMnet" id="Q9LJY0"/>
<dbReference type="PaxDb" id="3702-AT3G20190.1"/>
<dbReference type="ProteomicsDB" id="234876"/>
<dbReference type="EnsemblPlants" id="AT3G20190.1">
    <property type="protein sequence ID" value="AT3G20190.1"/>
    <property type="gene ID" value="AT3G20190"/>
</dbReference>
<dbReference type="GeneID" id="821563"/>
<dbReference type="Gramene" id="AT3G20190.1">
    <property type="protein sequence ID" value="AT3G20190.1"/>
    <property type="gene ID" value="AT3G20190"/>
</dbReference>
<dbReference type="KEGG" id="ath:AT3G20190"/>
<dbReference type="Araport" id="AT3G20190"/>
<dbReference type="TAIR" id="AT3G20190">
    <property type="gene designation" value="PRK4"/>
</dbReference>
<dbReference type="eggNOG" id="ENOG502QUJJ">
    <property type="taxonomic scope" value="Eukaryota"/>
</dbReference>
<dbReference type="HOGENOM" id="CLU_000288_92_6_1"/>
<dbReference type="InParanoid" id="Q9LJY0"/>
<dbReference type="OMA" id="GNVWGLQ"/>
<dbReference type="PhylomeDB" id="Q9LJY0"/>
<dbReference type="PRO" id="PR:Q9LJY0"/>
<dbReference type="Proteomes" id="UP000006548">
    <property type="component" value="Chromosome 3"/>
</dbReference>
<dbReference type="ExpressionAtlas" id="Q9LJY0">
    <property type="expression patterns" value="baseline and differential"/>
</dbReference>
<dbReference type="GO" id="GO:0016020">
    <property type="term" value="C:membrane"/>
    <property type="evidence" value="ECO:0007669"/>
    <property type="project" value="UniProtKB-SubCell"/>
</dbReference>
<dbReference type="GO" id="GO:0005524">
    <property type="term" value="F:ATP binding"/>
    <property type="evidence" value="ECO:0007669"/>
    <property type="project" value="UniProtKB-KW"/>
</dbReference>
<dbReference type="GO" id="GO:0106310">
    <property type="term" value="F:protein serine kinase activity"/>
    <property type="evidence" value="ECO:0007669"/>
    <property type="project" value="RHEA"/>
</dbReference>
<dbReference type="GO" id="GO:0004674">
    <property type="term" value="F:protein serine/threonine kinase activity"/>
    <property type="evidence" value="ECO:0007669"/>
    <property type="project" value="UniProtKB-EC"/>
</dbReference>
<dbReference type="GO" id="GO:0080092">
    <property type="term" value="P:regulation of pollen tube growth"/>
    <property type="evidence" value="ECO:0000315"/>
    <property type="project" value="TAIR"/>
</dbReference>
<dbReference type="FunFam" id="1.10.510.10:FF:000480">
    <property type="entry name" value="Pollen receptor-like kinase 1"/>
    <property type="match status" value="1"/>
</dbReference>
<dbReference type="FunFam" id="3.30.200.20:FF:000307">
    <property type="entry name" value="pollen receptor-like kinase 1"/>
    <property type="match status" value="1"/>
</dbReference>
<dbReference type="FunFam" id="3.80.10.10:FF:001609">
    <property type="entry name" value="Pollen receptor-like kinase 4"/>
    <property type="match status" value="1"/>
</dbReference>
<dbReference type="FunFam" id="3.80.10.10:FF:001955">
    <property type="entry name" value="Pollen receptor-like kinase 4"/>
    <property type="match status" value="1"/>
</dbReference>
<dbReference type="Gene3D" id="3.30.200.20">
    <property type="entry name" value="Phosphorylase Kinase, domain 1"/>
    <property type="match status" value="1"/>
</dbReference>
<dbReference type="Gene3D" id="3.80.10.10">
    <property type="entry name" value="Ribonuclease Inhibitor"/>
    <property type="match status" value="2"/>
</dbReference>
<dbReference type="Gene3D" id="1.10.510.10">
    <property type="entry name" value="Transferase(Phosphotransferase) domain 1"/>
    <property type="match status" value="1"/>
</dbReference>
<dbReference type="InterPro" id="IPR011009">
    <property type="entry name" value="Kinase-like_dom_sf"/>
</dbReference>
<dbReference type="InterPro" id="IPR001611">
    <property type="entry name" value="Leu-rich_rpt"/>
</dbReference>
<dbReference type="InterPro" id="IPR032675">
    <property type="entry name" value="LRR_dom_sf"/>
</dbReference>
<dbReference type="InterPro" id="IPR013210">
    <property type="entry name" value="LRR_N_plant-typ"/>
</dbReference>
<dbReference type="InterPro" id="IPR046959">
    <property type="entry name" value="PRK1-6/SRF4-like"/>
</dbReference>
<dbReference type="InterPro" id="IPR000719">
    <property type="entry name" value="Prot_kinase_dom"/>
</dbReference>
<dbReference type="InterPro" id="IPR001245">
    <property type="entry name" value="Ser-Thr/Tyr_kinase_cat_dom"/>
</dbReference>
<dbReference type="PANTHER" id="PTHR48007">
    <property type="entry name" value="LEUCINE-RICH REPEAT RECEPTOR-LIKE PROTEIN KINASE PXC1"/>
    <property type="match status" value="1"/>
</dbReference>
<dbReference type="PANTHER" id="PTHR48007:SF69">
    <property type="entry name" value="POLLEN RECEPTOR-LIKE KINASE 4"/>
    <property type="match status" value="1"/>
</dbReference>
<dbReference type="Pfam" id="PF13855">
    <property type="entry name" value="LRR_8"/>
    <property type="match status" value="1"/>
</dbReference>
<dbReference type="Pfam" id="PF08263">
    <property type="entry name" value="LRRNT_2"/>
    <property type="match status" value="1"/>
</dbReference>
<dbReference type="Pfam" id="PF07714">
    <property type="entry name" value="PK_Tyr_Ser-Thr"/>
    <property type="match status" value="1"/>
</dbReference>
<dbReference type="Pfam" id="PF15345">
    <property type="entry name" value="TMEM51"/>
    <property type="match status" value="1"/>
</dbReference>
<dbReference type="SUPFAM" id="SSF52058">
    <property type="entry name" value="L domain-like"/>
    <property type="match status" value="1"/>
</dbReference>
<dbReference type="SUPFAM" id="SSF56112">
    <property type="entry name" value="Protein kinase-like (PK-like)"/>
    <property type="match status" value="1"/>
</dbReference>
<dbReference type="PROSITE" id="PS50011">
    <property type="entry name" value="PROTEIN_KINASE_DOM"/>
    <property type="match status" value="1"/>
</dbReference>
<sequence>MLTWETPVMLASNTASTKKLAFITTFLIIVLCPVTMVMSQPQADVLPLPASDADCLLRFKDTLVNASFISSWDPSISPCKRNSENWFGVLCVTGNVWGLQLEGMGLTGKLDLEPLAAIKNLRTLSFMNNKFNGSMPSVKNFGALKSLYLSNNRFTGEIPADAFDGMHHLKKLLLANNAFRGSIPSSLAYLPMLLELRLNGNQFHGEIPYFKQKDLKLASFENNDLEGPIPESLSNMDPVSFSGNKNLCGPPLSPCSSDSGSSPDLPSSPTEKNKNQSFFIIAIVLIVIGIILMIISLVVCILHTRRRKSLSAYPSAGQDRTEKYNYDQSTDKDKAADSVTSYTSRRGAVPDQNKLLFLQDDIQRFDLQDLLRASAEVLGSGSFGSSYKTGINSGQMLVVKRYKHMNNVGRDEFHEHMRRLGRLKHPNLLPIVAYYYRREEKLLIAEFMPNRSLASHLHANHSVDQPGLDWPTRLKIIQGVAKGLGYLFNELTTLTIPHGHLKSSNVVLDESFEPLLTDYALRPVMNSEQSHNLMISYKSPEYSLKGHLTKKTDVWCLGVLILELLTGRFPENYLSQGYDANMSLVTWVSNMVKEKKTGDVFDKEMTGKKNCKAEMLNLLKIGLSCCEEDEERRMEMRDAVEKIERLKEGEFDNDFASTTHNVFASRLIDDDDFGFAMNR</sequence>
<keyword id="KW-0067">ATP-binding</keyword>
<keyword id="KW-0418">Kinase</keyword>
<keyword id="KW-0433">Leucine-rich repeat</keyword>
<keyword id="KW-0472">Membrane</keyword>
<keyword id="KW-0547">Nucleotide-binding</keyword>
<keyword id="KW-0597">Phosphoprotein</keyword>
<keyword id="KW-0675">Receptor</keyword>
<keyword id="KW-1185">Reference proteome</keyword>
<keyword id="KW-0677">Repeat</keyword>
<keyword id="KW-0732">Signal</keyword>
<keyword id="KW-0808">Transferase</keyword>
<keyword id="KW-0812">Transmembrane</keyword>
<keyword id="KW-1133">Transmembrane helix</keyword>
<name>PRK4_ARATH</name>
<accession>Q9LJY0</accession>
<accession>Q84WQ0</accession>
<organism evidence="15">
    <name type="scientific">Arabidopsis thaliana</name>
    <name type="common">Mouse-ear cress</name>
    <dbReference type="NCBI Taxonomy" id="3702"/>
    <lineage>
        <taxon>Eukaryota</taxon>
        <taxon>Viridiplantae</taxon>
        <taxon>Streptophyta</taxon>
        <taxon>Embryophyta</taxon>
        <taxon>Tracheophyta</taxon>
        <taxon>Spermatophyta</taxon>
        <taxon>Magnoliopsida</taxon>
        <taxon>eudicotyledons</taxon>
        <taxon>Gunneridae</taxon>
        <taxon>Pentapetalae</taxon>
        <taxon>rosids</taxon>
        <taxon>malvids</taxon>
        <taxon>Brassicales</taxon>
        <taxon>Brassicaceae</taxon>
        <taxon>Camelineae</taxon>
        <taxon>Arabidopsis</taxon>
    </lineage>
</organism>
<reference key="1">
    <citation type="journal article" date="2000" name="DNA Res.">
        <title>Structural analysis of Arabidopsis thaliana chromosome 3. II. Sequence features of the 4,251,695 bp regions covered by 90 P1, TAC and BAC clones.</title>
        <authorList>
            <person name="Kaneko T."/>
            <person name="Katoh T."/>
            <person name="Sato S."/>
            <person name="Nakamura Y."/>
            <person name="Asamizu E."/>
            <person name="Tabata S."/>
        </authorList>
    </citation>
    <scope>NUCLEOTIDE SEQUENCE [LARGE SCALE GENOMIC DNA]</scope>
    <source>
        <strain>cv. Columbia</strain>
    </source>
</reference>
<reference key="2">
    <citation type="journal article" date="2017" name="Plant J.">
        <title>Araport11: a complete reannotation of the Arabidopsis thaliana reference genome.</title>
        <authorList>
            <person name="Cheng C.Y."/>
            <person name="Krishnakumar V."/>
            <person name="Chan A.P."/>
            <person name="Thibaud-Nissen F."/>
            <person name="Schobel S."/>
            <person name="Town C.D."/>
        </authorList>
    </citation>
    <scope>GENOME REANNOTATION</scope>
    <source>
        <strain>cv. Columbia</strain>
    </source>
</reference>
<reference key="3">
    <citation type="submission" date="2008-10" db="EMBL/GenBank/DDBJ databases">
        <title>Arabidopsis ORF clones.</title>
        <authorList>
            <person name="de los Reyes C."/>
            <person name="Quan R."/>
            <person name="Chen H."/>
            <person name="Bautista V."/>
            <person name="Kim C.J."/>
            <person name="Ecker J.R."/>
        </authorList>
    </citation>
    <scope>NUCLEOTIDE SEQUENCE [LARGE SCALE MRNA]</scope>
    <source>
        <strain>cv. Columbia</strain>
    </source>
</reference>
<reference key="4">
    <citation type="journal article" date="2010" name="BMC Genomics">
        <title>Genome-wide cloning and sequence analysis of leucine-rich repeat receptor-like protein kinase genes in Arabidopsis thaliana.</title>
        <authorList>
            <person name="Gou X."/>
            <person name="He K."/>
            <person name="Yang H."/>
            <person name="Yuan T."/>
            <person name="Lin H."/>
            <person name="Clouse S.D."/>
            <person name="Li J."/>
        </authorList>
    </citation>
    <scope>NUCLEOTIDE SEQUENCE [LARGE SCALE MRNA]</scope>
    <source>
        <strain>cv. Columbia</strain>
    </source>
</reference>
<reference key="5">
    <citation type="journal article" date="2003" name="Science">
        <title>Empirical analysis of transcriptional activity in the Arabidopsis genome.</title>
        <authorList>
            <person name="Yamada K."/>
            <person name="Lim J."/>
            <person name="Dale J.M."/>
            <person name="Chen H."/>
            <person name="Shinn P."/>
            <person name="Palm C.J."/>
            <person name="Southwick A.M."/>
            <person name="Wu H.C."/>
            <person name="Kim C.J."/>
            <person name="Nguyen M."/>
            <person name="Pham P.K."/>
            <person name="Cheuk R.F."/>
            <person name="Karlin-Newmann G."/>
            <person name="Liu S.X."/>
            <person name="Lam B."/>
            <person name="Sakano H."/>
            <person name="Wu T."/>
            <person name="Yu G."/>
            <person name="Miranda M."/>
            <person name="Quach H.L."/>
            <person name="Tripp M."/>
            <person name="Chang C.H."/>
            <person name="Lee J.M."/>
            <person name="Toriumi M.J."/>
            <person name="Chan M.M."/>
            <person name="Tang C.C."/>
            <person name="Onodera C.S."/>
            <person name="Deng J.M."/>
            <person name="Akiyama K."/>
            <person name="Ansari Y."/>
            <person name="Arakawa T."/>
            <person name="Banh J."/>
            <person name="Banno F."/>
            <person name="Bowser L."/>
            <person name="Brooks S.Y."/>
            <person name="Carninci P."/>
            <person name="Chao Q."/>
            <person name="Choy N."/>
            <person name="Enju A."/>
            <person name="Goldsmith A.D."/>
            <person name="Gurjal M."/>
            <person name="Hansen N.F."/>
            <person name="Hayashizaki Y."/>
            <person name="Johnson-Hopson C."/>
            <person name="Hsuan V.W."/>
            <person name="Iida K."/>
            <person name="Karnes M."/>
            <person name="Khan S."/>
            <person name="Koesema E."/>
            <person name="Ishida J."/>
            <person name="Jiang P.X."/>
            <person name="Jones T."/>
            <person name="Kawai J."/>
            <person name="Kamiya A."/>
            <person name="Meyers C."/>
            <person name="Nakajima M."/>
            <person name="Narusaka M."/>
            <person name="Seki M."/>
            <person name="Sakurai T."/>
            <person name="Satou M."/>
            <person name="Tamse R."/>
            <person name="Vaysberg M."/>
            <person name="Wallender E.K."/>
            <person name="Wong C."/>
            <person name="Yamamura Y."/>
            <person name="Yuan S."/>
            <person name="Shinozaki K."/>
            <person name="Davis R.W."/>
            <person name="Theologis A."/>
            <person name="Ecker J.R."/>
        </authorList>
    </citation>
    <scope>NUCLEOTIDE SEQUENCE [LARGE SCALE MRNA] OF 227-679</scope>
    <source>
        <strain>cv. Columbia</strain>
    </source>
</reference>
<reference key="6">
    <citation type="journal article" date="2002" name="Plant Mol. Biol.">
        <title>New pollen-specific receptor kinases identified in tomato, maize and Arabidopsis: the tomato kinases show overlapping but distinct localization patterns on pollen tubes.</title>
        <authorList>
            <person name="Kim H.U."/>
            <person name="Cotter R."/>
            <person name="Johnson S."/>
            <person name="Senda M."/>
            <person name="Dodds P."/>
            <person name="Kulikauska R."/>
            <person name="Tang W."/>
            <person name="Ezcura I."/>
            <person name="Herzmark P."/>
            <person name="McCormick S."/>
        </authorList>
    </citation>
    <scope>TISSUE SPECIFICITY</scope>
    <scope>GENE FAMILY</scope>
    <scope>NOMENCLATURE</scope>
</reference>
<reference key="7">
    <citation type="journal article" date="2013" name="Mol. Plant">
        <title>AtPRK2 Promotes ROP1 activation via RopGEFs in the control of polarized pollen tube growth.</title>
        <authorList>
            <person name="Chang F."/>
            <person name="Gu Y."/>
            <person name="Ma H."/>
            <person name="Yang Z."/>
        </authorList>
    </citation>
    <scope>FUNCTION</scope>
    <scope>GENE FAMILY</scope>
    <scope>NOMENCLATURE</scope>
    <scope>INTERACTION WITH ROPGEF1</scope>
</reference>
<reference key="8">
    <citation type="journal article" date="2015" name="EMBO J.">
        <title>GRIM REAPER peptide binds to receptor kinase PRK5 to trigger cell death in Arabidopsis.</title>
        <authorList>
            <person name="Wrzaczek M."/>
            <person name="Vainonen J.P."/>
            <person name="Stael S."/>
            <person name="Tsiatsiani L."/>
            <person name="Help-Rinta-Rahko H."/>
            <person name="Gauthier A."/>
            <person name="Kaufholdt D."/>
            <person name="Bollhoener B."/>
            <person name="Lamminmaeki A."/>
            <person name="Staes A."/>
            <person name="Gevaert K."/>
            <person name="Tuominen H."/>
            <person name="Van Breusegem F."/>
            <person name="Helariutta Y."/>
            <person name="Kangasjaervi J."/>
        </authorList>
    </citation>
    <scope>INTERACTION WITH GRI</scope>
</reference>
<feature type="signal peptide" evidence="4">
    <location>
        <begin position="1"/>
        <end position="39"/>
    </location>
</feature>
<feature type="chain" id="PRO_0000431925" description="Pollen receptor-like kinase 4" evidence="4">
    <location>
        <begin position="40"/>
        <end position="679"/>
    </location>
</feature>
<feature type="transmembrane region" description="Helical" evidence="4">
    <location>
        <begin position="278"/>
        <end position="298"/>
    </location>
</feature>
<feature type="repeat" description="LRR 1" evidence="4">
    <location>
        <begin position="118"/>
        <end position="141"/>
    </location>
</feature>
<feature type="repeat" description="LRR 2" evidence="4">
    <location>
        <begin position="142"/>
        <end position="165"/>
    </location>
</feature>
<feature type="repeat" description="LRR 3" evidence="4">
    <location>
        <begin position="167"/>
        <end position="191"/>
    </location>
</feature>
<feature type="repeat" description="LRR 4" evidence="4">
    <location>
        <begin position="193"/>
        <end position="217"/>
    </location>
</feature>
<feature type="repeat" description="LRR 5" evidence="4">
    <location>
        <begin position="234"/>
        <end position="257"/>
    </location>
</feature>
<feature type="domain" description="Protein kinase" evidence="5">
    <location>
        <begin position="372"/>
        <end position="646"/>
    </location>
</feature>
<feature type="region of interest" description="Disordered" evidence="6">
    <location>
        <begin position="252"/>
        <end position="271"/>
    </location>
</feature>
<feature type="region of interest" description="Disordered" evidence="6">
    <location>
        <begin position="311"/>
        <end position="344"/>
    </location>
</feature>
<feature type="compositionally biased region" description="Low complexity" evidence="6">
    <location>
        <begin position="252"/>
        <end position="269"/>
    </location>
</feature>
<feature type="compositionally biased region" description="Basic and acidic residues" evidence="6">
    <location>
        <begin position="319"/>
        <end position="336"/>
    </location>
</feature>
<feature type="binding site" evidence="5">
    <location>
        <begin position="378"/>
        <end position="386"/>
    </location>
    <ligand>
        <name>ATP</name>
        <dbReference type="ChEBI" id="CHEBI:30616"/>
    </ligand>
</feature>
<feature type="binding site" evidence="5">
    <location>
        <position position="400"/>
    </location>
    <ligand>
        <name>ATP</name>
        <dbReference type="ChEBI" id="CHEBI:30616"/>
    </ligand>
</feature>
<feature type="modified residue" description="Phosphoserine" evidence="2">
    <location>
        <position position="374"/>
    </location>
</feature>
<feature type="modified residue" description="Phosphoserine" evidence="1">
    <location>
        <position position="452"/>
    </location>
</feature>
<feature type="modified residue" description="Phosphoserine" evidence="3">
    <location>
        <position position="455"/>
    </location>
</feature>
<feature type="modified residue" description="Phosphothreonine" evidence="1">
    <location>
        <position position="472"/>
    </location>
</feature>
<feature type="modified residue" description="Phosphotyrosine" evidence="1">
    <location>
        <position position="542"/>
    </location>
</feature>
<gene>
    <name evidence="11" type="primary">PRK4</name>
    <name evidence="10" type="synonym">PRKA</name>
    <name evidence="13" type="ordered locus">At3g20190</name>
    <name evidence="14" type="ORF">MAL21.21</name>
</gene>
<comment type="function">
    <text evidence="8">Receptor-like kinase involved in the control of pollen germination and pollen tube polar growth (PubMed:23024212). Can phosphorylate ROPGEF1 in vitro (PubMed:23024212).</text>
</comment>
<comment type="catalytic activity">
    <reaction evidence="12">
        <text>L-seryl-[protein] + ATP = O-phospho-L-seryl-[protein] + ADP + H(+)</text>
        <dbReference type="Rhea" id="RHEA:17989"/>
        <dbReference type="Rhea" id="RHEA-COMP:9863"/>
        <dbReference type="Rhea" id="RHEA-COMP:11604"/>
        <dbReference type="ChEBI" id="CHEBI:15378"/>
        <dbReference type="ChEBI" id="CHEBI:29999"/>
        <dbReference type="ChEBI" id="CHEBI:30616"/>
        <dbReference type="ChEBI" id="CHEBI:83421"/>
        <dbReference type="ChEBI" id="CHEBI:456216"/>
        <dbReference type="EC" id="2.7.11.1"/>
    </reaction>
</comment>
<comment type="catalytic activity">
    <reaction evidence="12">
        <text>L-threonyl-[protein] + ATP = O-phospho-L-threonyl-[protein] + ADP + H(+)</text>
        <dbReference type="Rhea" id="RHEA:46608"/>
        <dbReference type="Rhea" id="RHEA-COMP:11060"/>
        <dbReference type="Rhea" id="RHEA-COMP:11605"/>
        <dbReference type="ChEBI" id="CHEBI:15378"/>
        <dbReference type="ChEBI" id="CHEBI:30013"/>
        <dbReference type="ChEBI" id="CHEBI:30616"/>
        <dbReference type="ChEBI" id="CHEBI:61977"/>
        <dbReference type="ChEBI" id="CHEBI:456216"/>
        <dbReference type="EC" id="2.7.11.1"/>
    </reaction>
</comment>
<comment type="subunit">
    <text evidence="8 9">Interacts in vitro with ROPGEF1 (via PRONE domain) (PubMed:23024212). Interacts weakly with the GRI peptide (PubMed:25398910).</text>
</comment>
<comment type="interaction">
    <interactant intactId="EBI-16914444">
        <id>Q9LJY0</id>
    </interactant>
    <interactant intactId="EBI-20657656">
        <id>C0LGH8</id>
        <label>At1g63430</label>
    </interactant>
    <organismsDiffer>false</organismsDiffer>
    <experiments>2</experiments>
</comment>
<comment type="interaction">
    <interactant intactId="EBI-16914444">
        <id>Q9LJY0</id>
    </interactant>
    <interactant intactId="EBI-20652666">
        <id>C0LGJ1</id>
        <label>At1g74360</label>
    </interactant>
    <organismsDiffer>false</organismsDiffer>
    <experiments>2</experiments>
</comment>
<comment type="interaction">
    <interactant intactId="EBI-16914444">
        <id>Q9LJY0</id>
    </interactant>
    <interactant intactId="EBI-20664191">
        <id>Q9LFG1</id>
        <label>At3g53590</label>
    </interactant>
    <organismsDiffer>false</organismsDiffer>
    <experiments>2</experiments>
</comment>
<comment type="interaction">
    <interactant intactId="EBI-16914444">
        <id>Q9LJY0</id>
    </interactant>
    <interactant intactId="EBI-17123993">
        <id>Q9LT96</id>
        <label>At5g49770</label>
    </interactant>
    <organismsDiffer>false</organismsDiffer>
    <experiments>2</experiments>
</comment>
<comment type="interaction">
    <interactant intactId="EBI-16914444">
        <id>Q9LJY0</id>
    </interactant>
    <interactant intactId="EBI-16887796">
        <id>O64794</id>
        <label>F12B7.6</label>
    </interactant>
    <organismsDiffer>false</organismsDiffer>
    <experiments>2</experiments>
</comment>
<comment type="interaction">
    <interactant intactId="EBI-16914444">
        <id>Q9LJY0</id>
    </interactant>
    <interactant intactId="EBI-17121474">
        <id>Q93ZS4</id>
        <label>NIK3</label>
    </interactant>
    <organismsDiffer>false</organismsDiffer>
    <experiments>2</experiments>
</comment>
<comment type="interaction">
    <interactant intactId="EBI-16914444">
        <id>Q9LJY0</id>
    </interactant>
    <interactant intactId="EBI-16172949">
        <id>Q9ZVR7</id>
        <label>PSKR1</label>
    </interactant>
    <organismsDiffer>false</organismsDiffer>
    <experiments>2</experiments>
</comment>
<comment type="interaction">
    <interactant intactId="EBI-16914444">
        <id>Q9LJY0</id>
    </interactant>
    <interactant intactId="EBI-16902047">
        <id>Q9FN37</id>
        <label>PSKR2</label>
    </interactant>
    <organismsDiffer>false</organismsDiffer>
    <experiments>2</experiments>
</comment>
<comment type="interaction">
    <interactant intactId="EBI-16914444">
        <id>Q9LJY0</id>
    </interactant>
    <interactant intactId="EBI-20664449">
        <id>C0LGV1</id>
        <label>RGI2</label>
    </interactant>
    <organismsDiffer>false</organismsDiffer>
    <experiments>2</experiments>
</comment>
<comment type="interaction">
    <interactant intactId="EBI-16914444">
        <id>Q9LJY0</id>
    </interactant>
    <interactant intactId="EBI-16964286">
        <id>C0LGF5</id>
        <label>RGI5</label>
    </interactant>
    <organismsDiffer>false</organismsDiffer>
    <experiments>2</experiments>
</comment>
<comment type="interaction">
    <interactant intactId="EBI-16914444">
        <id>Q9LJY0</id>
    </interactant>
    <interactant intactId="EBI-16905883">
        <id>Q9SKB2</id>
        <label>SOBIR1</label>
    </interactant>
    <organismsDiffer>false</organismsDiffer>
    <experiments>2</experiments>
</comment>
<comment type="interaction">
    <interactant intactId="EBI-16914444">
        <id>Q9LJY0</id>
    </interactant>
    <interactant intactId="EBI-15730235">
        <id>Q9FII5</id>
        <label>TDR</label>
    </interactant>
    <organismsDiffer>false</organismsDiffer>
    <experiments>2</experiments>
</comment>
<comment type="interaction">
    <interactant intactId="EBI-16914444">
        <id>Q9LJY0</id>
    </interactant>
    <interactant intactId="EBI-16896864">
        <id>Q9SIT1</id>
        <label>TMK3</label>
    </interactant>
    <organismsDiffer>false</organismsDiffer>
    <experiments>2</experiments>
</comment>
<comment type="subcellular location">
    <subcellularLocation>
        <location evidence="12">Membrane</location>
        <topology evidence="12">Single-pass membrane protein</topology>
    </subcellularLocation>
</comment>
<comment type="tissue specificity">
    <text evidence="7">Expressed in pollen and/or in flowers, but not in leaves.</text>
</comment>
<comment type="domain">
    <text evidence="5">The protein kinase domain may be catalytically impaired due to the lack of the conserved Asp active site at position 500, which is replaced by a His residue.</text>
</comment>
<comment type="similarity">
    <text evidence="12">Belongs to the protein kinase superfamily. Ser/Thr protein kinase family.</text>
</comment>
<proteinExistence type="evidence at protein level"/>
<evidence type="ECO:0000250" key="1">
    <source>
        <dbReference type="UniProtKB" id="Q94AG2"/>
    </source>
</evidence>
<evidence type="ECO:0000250" key="2">
    <source>
        <dbReference type="UniProtKB" id="Q94F62"/>
    </source>
</evidence>
<evidence type="ECO:0000250" key="3">
    <source>
        <dbReference type="UniProtKB" id="Q9LSI9"/>
    </source>
</evidence>
<evidence type="ECO:0000255" key="4"/>
<evidence type="ECO:0000255" key="5">
    <source>
        <dbReference type="PROSITE-ProRule" id="PRU00159"/>
    </source>
</evidence>
<evidence type="ECO:0000256" key="6">
    <source>
        <dbReference type="SAM" id="MobiDB-lite"/>
    </source>
</evidence>
<evidence type="ECO:0000269" key="7">
    <source>
    </source>
</evidence>
<evidence type="ECO:0000269" key="8">
    <source>
    </source>
</evidence>
<evidence type="ECO:0000269" key="9">
    <source>
    </source>
</evidence>
<evidence type="ECO:0000303" key="10">
    <source>
    </source>
</evidence>
<evidence type="ECO:0000303" key="11">
    <source>
    </source>
</evidence>
<evidence type="ECO:0000305" key="12"/>
<evidence type="ECO:0000312" key="13">
    <source>
        <dbReference type="Araport" id="AT3G20190"/>
    </source>
</evidence>
<evidence type="ECO:0000312" key="14">
    <source>
        <dbReference type="EMBL" id="BAB01878.1"/>
    </source>
</evidence>
<evidence type="ECO:0000312" key="15">
    <source>
        <dbReference type="Proteomes" id="UP000006548"/>
    </source>
</evidence>